<keyword id="KW-0496">Mitochondrion</keyword>
<keyword id="KW-0521">NADP</keyword>
<keyword id="KW-1185">Reference proteome</keyword>
<proteinExistence type="evidence at transcript level"/>
<gene>
    <name type="primary">hsdl1</name>
    <name type="ORF">si:ch211-172b19.1</name>
    <name type="ORF">zgc:103498</name>
</gene>
<name>HSDL1_DANRE</name>
<protein>
    <recommendedName>
        <fullName>Inactive hydroxysteroid dehydrogenase-like protein 1</fullName>
    </recommendedName>
</protein>
<sequence>MAAVDSFQLLYREIARSCSGYVETLALVGACYMASKTVIFMRDCYSLIRLYFVPRLVRHRDLSQQYGQWAIICGASEAIAKAYAEELARHGICVILISKDLSSVSDTARLISNNYGVEAICIEADFNQGPSACKPIKDAISSKDIGFLVNSFDGTLEISQNFLELSESVLWGTINRNIAATTLVTRLALPAMMEKGRGAVVNISSGHCFHPIPRKAAFSASTAFLDNFSRSLHYEYGDQGVFVQSLLPFRVASQRPEGSAPPASWLVPSPQVYASHALSTLGISHRTTGYWPHSMQLGLVKMMPEWVWMLGSRVFTMAT</sequence>
<dbReference type="EMBL" id="CT955964">
    <property type="protein sequence ID" value="CAN88283.1"/>
    <property type="molecule type" value="Genomic_DNA"/>
</dbReference>
<dbReference type="EMBL" id="BC086821">
    <property type="protein sequence ID" value="AAH86821.1"/>
    <property type="molecule type" value="mRNA"/>
</dbReference>
<dbReference type="RefSeq" id="NP_001008607.1">
    <property type="nucleotide sequence ID" value="NM_001008607.1"/>
</dbReference>
<dbReference type="SMR" id="A5WWC6"/>
<dbReference type="FunCoup" id="A5WWC6">
    <property type="interactions" value="54"/>
</dbReference>
<dbReference type="STRING" id="7955.ENSDARP00000061172"/>
<dbReference type="PaxDb" id="7955-ENSDARP00000061172"/>
<dbReference type="PeptideAtlas" id="A5WWC6"/>
<dbReference type="DNASU" id="494064"/>
<dbReference type="Ensembl" id="ENSDART00000061173">
    <property type="protein sequence ID" value="ENSDARP00000061172"/>
    <property type="gene ID" value="ENSDARG00000041736"/>
</dbReference>
<dbReference type="GeneID" id="494064"/>
<dbReference type="KEGG" id="dre:494064"/>
<dbReference type="AGR" id="ZFIN:ZDB-GENE-041212-31"/>
<dbReference type="CTD" id="83693"/>
<dbReference type="ZFIN" id="ZDB-GENE-041212-31">
    <property type="gene designation" value="hsdl1"/>
</dbReference>
<dbReference type="eggNOG" id="KOG1014">
    <property type="taxonomic scope" value="Eukaryota"/>
</dbReference>
<dbReference type="HOGENOM" id="CLU_010194_38_0_1"/>
<dbReference type="InParanoid" id="A5WWC6"/>
<dbReference type="OMA" id="QYGLMKC"/>
<dbReference type="OrthoDB" id="5545019at2759"/>
<dbReference type="PhylomeDB" id="A5WWC6"/>
<dbReference type="TreeFam" id="TF314591"/>
<dbReference type="PRO" id="PR:A5WWC6"/>
<dbReference type="Proteomes" id="UP000000437">
    <property type="component" value="Chromosome 20"/>
</dbReference>
<dbReference type="Bgee" id="ENSDARG00000041736">
    <property type="expression patterns" value="Expressed in early embryo and 24 other cell types or tissues"/>
</dbReference>
<dbReference type="GO" id="GO:0005739">
    <property type="term" value="C:mitochondrion"/>
    <property type="evidence" value="ECO:0000314"/>
    <property type="project" value="ZFIN"/>
</dbReference>
<dbReference type="CDD" id="cd05356">
    <property type="entry name" value="17beta-HSD1_like_SDR_c"/>
    <property type="match status" value="1"/>
</dbReference>
<dbReference type="FunFam" id="3.40.50.720:FF:000137">
    <property type="entry name" value="Hydroxysteroid (17-beta) dehydrogenase 3"/>
    <property type="match status" value="1"/>
</dbReference>
<dbReference type="Gene3D" id="3.40.50.720">
    <property type="entry name" value="NAD(P)-binding Rossmann-like Domain"/>
    <property type="match status" value="1"/>
</dbReference>
<dbReference type="InterPro" id="IPR052149">
    <property type="entry name" value="17-beta-HSD3-like"/>
</dbReference>
<dbReference type="InterPro" id="IPR036291">
    <property type="entry name" value="NAD(P)-bd_dom_sf"/>
</dbReference>
<dbReference type="InterPro" id="IPR002347">
    <property type="entry name" value="SDR_fam"/>
</dbReference>
<dbReference type="PANTHER" id="PTHR44889">
    <property type="entry name" value="INACTIVE HYDROXYSTEROID DEHYDROGENASE-LIKE PROTEIN 1"/>
    <property type="match status" value="1"/>
</dbReference>
<dbReference type="PANTHER" id="PTHR44889:SF1">
    <property type="entry name" value="INACTIVE HYDROXYSTEROID DEHYDROGENASE-LIKE PROTEIN 1"/>
    <property type="match status" value="1"/>
</dbReference>
<dbReference type="Pfam" id="PF00106">
    <property type="entry name" value="adh_short"/>
    <property type="match status" value="1"/>
</dbReference>
<dbReference type="PIRSF" id="PIRSF000126">
    <property type="entry name" value="11-beta-HSD1"/>
    <property type="match status" value="1"/>
</dbReference>
<dbReference type="PRINTS" id="PR00081">
    <property type="entry name" value="GDHRDH"/>
</dbReference>
<dbReference type="SUPFAM" id="SSF51735">
    <property type="entry name" value="NAD(P)-binding Rossmann-fold domains"/>
    <property type="match status" value="1"/>
</dbReference>
<accession>A5WWC6</accession>
<accession>Q5PR56</accession>
<evidence type="ECO:0000250" key="1"/>
<evidence type="ECO:0000269" key="2">
    <source>
    </source>
</evidence>
<evidence type="ECO:0000305" key="3"/>
<organism>
    <name type="scientific">Danio rerio</name>
    <name type="common">Zebrafish</name>
    <name type="synonym">Brachydanio rerio</name>
    <dbReference type="NCBI Taxonomy" id="7955"/>
    <lineage>
        <taxon>Eukaryota</taxon>
        <taxon>Metazoa</taxon>
        <taxon>Chordata</taxon>
        <taxon>Craniata</taxon>
        <taxon>Vertebrata</taxon>
        <taxon>Euteleostomi</taxon>
        <taxon>Actinopterygii</taxon>
        <taxon>Neopterygii</taxon>
        <taxon>Teleostei</taxon>
        <taxon>Ostariophysi</taxon>
        <taxon>Cypriniformes</taxon>
        <taxon>Danionidae</taxon>
        <taxon>Danioninae</taxon>
        <taxon>Danio</taxon>
    </lineage>
</organism>
<feature type="chain" id="PRO_0000313676" description="Inactive hydroxysteroid dehydrogenase-like protein 1">
    <location>
        <begin position="1"/>
        <end position="319"/>
    </location>
</feature>
<feature type="region of interest" description="Required for mitochondria translocation" evidence="1">
    <location>
        <begin position="2"/>
        <end position="82"/>
    </location>
</feature>
<feature type="binding site" evidence="1">
    <location>
        <begin position="74"/>
        <end position="80"/>
    </location>
    <ligand>
        <name>NADP(+)</name>
        <dbReference type="ChEBI" id="CHEBI:58349"/>
    </ligand>
</feature>
<feature type="binding site" evidence="1">
    <location>
        <position position="99"/>
    </location>
    <ligand>
        <name>NADP(+)</name>
        <dbReference type="ChEBI" id="CHEBI:58349"/>
    </ligand>
</feature>
<feature type="binding site" evidence="1">
    <location>
        <position position="125"/>
    </location>
    <ligand>
        <name>NADP(+)</name>
        <dbReference type="ChEBI" id="CHEBI:58349"/>
    </ligand>
</feature>
<feature type="sequence conflict" description="In Ref. 2; AAH86821." evidence="3" ref="2">
    <original>L</original>
    <variation>I</variation>
    <location>
        <position position="148"/>
    </location>
</feature>
<feature type="sequence conflict" description="In Ref. 2; AAH86821." evidence="3" ref="2">
    <original>N</original>
    <variation>D</variation>
    <location>
        <position position="175"/>
    </location>
</feature>
<feature type="sequence conflict" description="In Ref. 2; AAH86821." evidence="3" ref="2">
    <original>K</original>
    <variation>R</variation>
    <location>
        <position position="195"/>
    </location>
</feature>
<feature type="sequence conflict" description="In Ref. 2; AAH86821." evidence="3" ref="2">
    <original>H</original>
    <variation>Q</variation>
    <location>
        <position position="233"/>
    </location>
</feature>
<reference key="1">
    <citation type="journal article" date="2013" name="Nature">
        <title>The zebrafish reference genome sequence and its relationship to the human genome.</title>
        <authorList>
            <person name="Howe K."/>
            <person name="Clark M.D."/>
            <person name="Torroja C.F."/>
            <person name="Torrance J."/>
            <person name="Berthelot C."/>
            <person name="Muffato M."/>
            <person name="Collins J.E."/>
            <person name="Humphray S."/>
            <person name="McLaren K."/>
            <person name="Matthews L."/>
            <person name="McLaren S."/>
            <person name="Sealy I."/>
            <person name="Caccamo M."/>
            <person name="Churcher C."/>
            <person name="Scott C."/>
            <person name="Barrett J.C."/>
            <person name="Koch R."/>
            <person name="Rauch G.J."/>
            <person name="White S."/>
            <person name="Chow W."/>
            <person name="Kilian B."/>
            <person name="Quintais L.T."/>
            <person name="Guerra-Assuncao J.A."/>
            <person name="Zhou Y."/>
            <person name="Gu Y."/>
            <person name="Yen J."/>
            <person name="Vogel J.H."/>
            <person name="Eyre T."/>
            <person name="Redmond S."/>
            <person name="Banerjee R."/>
            <person name="Chi J."/>
            <person name="Fu B."/>
            <person name="Langley E."/>
            <person name="Maguire S.F."/>
            <person name="Laird G.K."/>
            <person name="Lloyd D."/>
            <person name="Kenyon E."/>
            <person name="Donaldson S."/>
            <person name="Sehra H."/>
            <person name="Almeida-King J."/>
            <person name="Loveland J."/>
            <person name="Trevanion S."/>
            <person name="Jones M."/>
            <person name="Quail M."/>
            <person name="Willey D."/>
            <person name="Hunt A."/>
            <person name="Burton J."/>
            <person name="Sims S."/>
            <person name="McLay K."/>
            <person name="Plumb B."/>
            <person name="Davis J."/>
            <person name="Clee C."/>
            <person name="Oliver K."/>
            <person name="Clark R."/>
            <person name="Riddle C."/>
            <person name="Elliot D."/>
            <person name="Threadgold G."/>
            <person name="Harden G."/>
            <person name="Ware D."/>
            <person name="Begum S."/>
            <person name="Mortimore B."/>
            <person name="Kerry G."/>
            <person name="Heath P."/>
            <person name="Phillimore B."/>
            <person name="Tracey A."/>
            <person name="Corby N."/>
            <person name="Dunn M."/>
            <person name="Johnson C."/>
            <person name="Wood J."/>
            <person name="Clark S."/>
            <person name="Pelan S."/>
            <person name="Griffiths G."/>
            <person name="Smith M."/>
            <person name="Glithero R."/>
            <person name="Howden P."/>
            <person name="Barker N."/>
            <person name="Lloyd C."/>
            <person name="Stevens C."/>
            <person name="Harley J."/>
            <person name="Holt K."/>
            <person name="Panagiotidis G."/>
            <person name="Lovell J."/>
            <person name="Beasley H."/>
            <person name="Henderson C."/>
            <person name="Gordon D."/>
            <person name="Auger K."/>
            <person name="Wright D."/>
            <person name="Collins J."/>
            <person name="Raisen C."/>
            <person name="Dyer L."/>
            <person name="Leung K."/>
            <person name="Robertson L."/>
            <person name="Ambridge K."/>
            <person name="Leongamornlert D."/>
            <person name="McGuire S."/>
            <person name="Gilderthorp R."/>
            <person name="Griffiths C."/>
            <person name="Manthravadi D."/>
            <person name="Nichol S."/>
            <person name="Barker G."/>
            <person name="Whitehead S."/>
            <person name="Kay M."/>
            <person name="Brown J."/>
            <person name="Murnane C."/>
            <person name="Gray E."/>
            <person name="Humphries M."/>
            <person name="Sycamore N."/>
            <person name="Barker D."/>
            <person name="Saunders D."/>
            <person name="Wallis J."/>
            <person name="Babbage A."/>
            <person name="Hammond S."/>
            <person name="Mashreghi-Mohammadi M."/>
            <person name="Barr L."/>
            <person name="Martin S."/>
            <person name="Wray P."/>
            <person name="Ellington A."/>
            <person name="Matthews N."/>
            <person name="Ellwood M."/>
            <person name="Woodmansey R."/>
            <person name="Clark G."/>
            <person name="Cooper J."/>
            <person name="Tromans A."/>
            <person name="Grafham D."/>
            <person name="Skuce C."/>
            <person name="Pandian R."/>
            <person name="Andrews R."/>
            <person name="Harrison E."/>
            <person name="Kimberley A."/>
            <person name="Garnett J."/>
            <person name="Fosker N."/>
            <person name="Hall R."/>
            <person name="Garner P."/>
            <person name="Kelly D."/>
            <person name="Bird C."/>
            <person name="Palmer S."/>
            <person name="Gehring I."/>
            <person name="Berger A."/>
            <person name="Dooley C.M."/>
            <person name="Ersan-Urun Z."/>
            <person name="Eser C."/>
            <person name="Geiger H."/>
            <person name="Geisler M."/>
            <person name="Karotki L."/>
            <person name="Kirn A."/>
            <person name="Konantz J."/>
            <person name="Konantz M."/>
            <person name="Oberlander M."/>
            <person name="Rudolph-Geiger S."/>
            <person name="Teucke M."/>
            <person name="Lanz C."/>
            <person name="Raddatz G."/>
            <person name="Osoegawa K."/>
            <person name="Zhu B."/>
            <person name="Rapp A."/>
            <person name="Widaa S."/>
            <person name="Langford C."/>
            <person name="Yang F."/>
            <person name="Schuster S.C."/>
            <person name="Carter N.P."/>
            <person name="Harrow J."/>
            <person name="Ning Z."/>
            <person name="Herrero J."/>
            <person name="Searle S.M."/>
            <person name="Enright A."/>
            <person name="Geisler R."/>
            <person name="Plasterk R.H."/>
            <person name="Lee C."/>
            <person name="Westerfield M."/>
            <person name="de Jong P.J."/>
            <person name="Zon L.I."/>
            <person name="Postlethwait J.H."/>
            <person name="Nusslein-Volhard C."/>
            <person name="Hubbard T.J."/>
            <person name="Roest Crollius H."/>
            <person name="Rogers J."/>
            <person name="Stemple D.L."/>
        </authorList>
    </citation>
    <scope>NUCLEOTIDE SEQUENCE [LARGE SCALE GENOMIC DNA]</scope>
    <source>
        <strain>Tuebingen</strain>
    </source>
</reference>
<reference key="2">
    <citation type="submission" date="2004-12" db="EMBL/GenBank/DDBJ databases">
        <authorList>
            <consortium name="NIH - Zebrafish Gene Collection (ZGC) project"/>
        </authorList>
    </citation>
    <scope>NUCLEOTIDE SEQUENCE [LARGE SCALE MRNA]</scope>
    <source>
        <tissue>Ovary</tissue>
    </source>
</reference>
<reference key="3">
    <citation type="journal article" date="2009" name="Chem. Biol. Interact.">
        <title>Human and zebrafish hydroxysteroid dehydrogenase like 1 (HSDL1) proteins are inactive enzymes but conserved among species.</title>
        <authorList>
            <person name="Meier M."/>
            <person name="Tokarz J."/>
            <person name="Haller F."/>
            <person name="Mindnich R."/>
            <person name="Adamski J."/>
        </authorList>
    </citation>
    <scope>SUBCELLULAR LOCATION</scope>
</reference>
<comment type="subcellular location">
    <subcellularLocation>
        <location evidence="2">Mitochondrion</location>
    </subcellularLocation>
</comment>
<comment type="similarity">
    <text evidence="3">Belongs to the short-chain dehydrogenases/reductases (SDR) family. 17-beta-HSD 3 subfamily.</text>
</comment>
<comment type="caution">
    <text evidence="3">Although it belongs to the SDR family, Phe-218 is present instead of the conserved Tyr which is an active site residue. It is therefore expected that this protein lacks oxidoreductase activity.</text>
</comment>